<reference key="1">
    <citation type="journal article" date="1994" name="J. Mol. Endocrinol.">
        <title>Isolation and characterization of ovine IGFBP-4: protein purification and cDNA sequence.</title>
        <authorList>
            <person name="Carr J.M."/>
            <person name="Grant P.A."/>
            <person name="Francis G.L."/>
            <person name="Owens J.A."/>
            <person name="Wallace J.C."/>
            <person name="Walton P.E."/>
        </authorList>
    </citation>
    <scope>NUCLEOTIDE SEQUENCE [MRNA]</scope>
    <scope>PROTEIN SEQUENCE OF N-TERMINUS</scope>
    <scope>GLYCOSYLATION AT ASN-104</scope>
    <scope>TISSUE SPECIFICITY</scope>
    <source>
        <tissue>Liver</tissue>
    </source>
</reference>
<keyword id="KW-0903">Direct protein sequencing</keyword>
<keyword id="KW-1015">Disulfide bond</keyword>
<keyword id="KW-0325">Glycoprotein</keyword>
<keyword id="KW-0340">Growth factor binding</keyword>
<keyword id="KW-0597">Phosphoprotein</keyword>
<keyword id="KW-1185">Reference proteome</keyword>
<keyword id="KW-0964">Secreted</keyword>
<comment type="function">
    <text>IGF-binding proteins prolong the half-life of the IGFs and have been shown to either inhibit or stimulate the growth promoting effects of the IGFs on cell culture. They alter the interaction of IGFs with their cell surface receptors.</text>
</comment>
<comment type="subunit">
    <text evidence="1">Binds IGF2 more than IGF1.</text>
</comment>
<comment type="subcellular location">
    <subcellularLocation>
        <location>Secreted</location>
    </subcellularLocation>
</comment>
<comment type="tissue specificity">
    <text evidence="5">Detected in adult ewe, liver &gt; kidney &gt; lung &gt;&gt; heart and also in several fetal tissues.</text>
</comment>
<comment type="PTM">
    <text evidence="5">There are two different molecular mass variants (29 kDa and 24 kDa forms). The 29 kDa form was shown to be N-glycosylated.</text>
</comment>
<gene>
    <name type="primary">IGFBP4</name>
</gene>
<sequence length="237" mass="25869">DEAIHCPPCSEEKLARCRPPVGCEELVREPGCGCCATCALGKGMPCGVYTPDCGSGLRCHPPRGVEKPLHTLVHGQGVCMELAEIEAIQESLQPSDKDEGDHPNNSFSPCSAHDRKCLQKHLAKIRDRSTSGGKMKVIGAPREEVRPVPQGSCQSELHRALERLAASQSRTHEDLYIIPIPNCDRNGNFHPKQCHPALDGQRGKCWCVDRKTGVKLPGGLEPKGELDCHQLADSFRE</sequence>
<evidence type="ECO:0000250" key="1"/>
<evidence type="ECO:0000250" key="2">
    <source>
        <dbReference type="UniProtKB" id="P22692"/>
    </source>
</evidence>
<evidence type="ECO:0000255" key="3">
    <source>
        <dbReference type="PROSITE-ProRule" id="PRU00500"/>
    </source>
</evidence>
<evidence type="ECO:0000255" key="4">
    <source>
        <dbReference type="PROSITE-ProRule" id="PRU00653"/>
    </source>
</evidence>
<evidence type="ECO:0000269" key="5">
    <source>
    </source>
</evidence>
<name>IBP4_SHEEP</name>
<dbReference type="EMBL" id="S77394">
    <property type="protein sequence ID" value="AAB33382.1"/>
    <property type="molecule type" value="mRNA"/>
</dbReference>
<dbReference type="PIR" id="I47031">
    <property type="entry name" value="I47031"/>
</dbReference>
<dbReference type="SMR" id="Q28893"/>
<dbReference type="STRING" id="9940.ENSOARP00000015663"/>
<dbReference type="MEROPS" id="I31.952"/>
<dbReference type="GlyCosmos" id="Q28893">
    <property type="glycosylation" value="1 site, No reported glycans"/>
</dbReference>
<dbReference type="iPTMnet" id="Q28893"/>
<dbReference type="PaxDb" id="9940-ENSOARP00000015663"/>
<dbReference type="eggNOG" id="ENOG502QTC8">
    <property type="taxonomic scope" value="Eukaryota"/>
</dbReference>
<dbReference type="Proteomes" id="UP000002356">
    <property type="component" value="Unplaced"/>
</dbReference>
<dbReference type="GO" id="GO:0005615">
    <property type="term" value="C:extracellular space"/>
    <property type="evidence" value="ECO:0007669"/>
    <property type="project" value="TreeGrafter"/>
</dbReference>
<dbReference type="GO" id="GO:0031994">
    <property type="term" value="F:insulin-like growth factor I binding"/>
    <property type="evidence" value="ECO:0007669"/>
    <property type="project" value="TreeGrafter"/>
</dbReference>
<dbReference type="GO" id="GO:0031995">
    <property type="term" value="F:insulin-like growth factor II binding"/>
    <property type="evidence" value="ECO:0007669"/>
    <property type="project" value="TreeGrafter"/>
</dbReference>
<dbReference type="GO" id="GO:0043567">
    <property type="term" value="P:regulation of insulin-like growth factor receptor signaling pathway"/>
    <property type="evidence" value="ECO:0007669"/>
    <property type="project" value="TreeGrafter"/>
</dbReference>
<dbReference type="CDD" id="cd00191">
    <property type="entry name" value="TY"/>
    <property type="match status" value="1"/>
</dbReference>
<dbReference type="FunFam" id="4.10.40.20:FF:000001">
    <property type="entry name" value="Insulin-like growth factor binding protein 5"/>
    <property type="match status" value="1"/>
</dbReference>
<dbReference type="FunFam" id="4.10.800.10:FF:000002">
    <property type="entry name" value="Insulin-like growth factor-binding protein 2"/>
    <property type="match status" value="1"/>
</dbReference>
<dbReference type="Gene3D" id="4.10.40.20">
    <property type="match status" value="1"/>
</dbReference>
<dbReference type="Gene3D" id="4.10.800.10">
    <property type="entry name" value="Thyroglobulin type-1"/>
    <property type="match status" value="1"/>
</dbReference>
<dbReference type="InterPro" id="IPR009030">
    <property type="entry name" value="Growth_fac_rcpt_cys_sf"/>
</dbReference>
<dbReference type="InterPro" id="IPR022327">
    <property type="entry name" value="IGFBP-4"/>
</dbReference>
<dbReference type="InterPro" id="IPR000867">
    <property type="entry name" value="IGFBP-like"/>
</dbReference>
<dbReference type="InterPro" id="IPR022321">
    <property type="entry name" value="IGFBP_1-6_chordata"/>
</dbReference>
<dbReference type="InterPro" id="IPR017891">
    <property type="entry name" value="Insulin_GF-bd_Cys-rich_CS"/>
</dbReference>
<dbReference type="InterPro" id="IPR000716">
    <property type="entry name" value="Thyroglobulin_1"/>
</dbReference>
<dbReference type="InterPro" id="IPR036857">
    <property type="entry name" value="Thyroglobulin_1_sf"/>
</dbReference>
<dbReference type="PANTHER" id="PTHR11551">
    <property type="entry name" value="INSULIN-LIKE GROWTH FACTOR BINDING PROTEIN"/>
    <property type="match status" value="1"/>
</dbReference>
<dbReference type="PANTHER" id="PTHR11551:SF7">
    <property type="entry name" value="INSULIN-LIKE GROWTH FACTOR-BINDING PROTEIN 4"/>
    <property type="match status" value="1"/>
</dbReference>
<dbReference type="Pfam" id="PF00219">
    <property type="entry name" value="IGFBP"/>
    <property type="match status" value="1"/>
</dbReference>
<dbReference type="Pfam" id="PF00086">
    <property type="entry name" value="Thyroglobulin_1"/>
    <property type="match status" value="1"/>
</dbReference>
<dbReference type="PRINTS" id="PR01976">
    <property type="entry name" value="IGFBPFAMILY"/>
</dbReference>
<dbReference type="PRINTS" id="PR01980">
    <property type="entry name" value="IGFBPFAMILY4"/>
</dbReference>
<dbReference type="SMART" id="SM00121">
    <property type="entry name" value="IB"/>
    <property type="match status" value="1"/>
</dbReference>
<dbReference type="SMART" id="SM00211">
    <property type="entry name" value="TY"/>
    <property type="match status" value="1"/>
</dbReference>
<dbReference type="SUPFAM" id="SSF57184">
    <property type="entry name" value="Growth factor receptor domain"/>
    <property type="match status" value="1"/>
</dbReference>
<dbReference type="SUPFAM" id="SSF57610">
    <property type="entry name" value="Thyroglobulin type-1 domain"/>
    <property type="match status" value="1"/>
</dbReference>
<dbReference type="PROSITE" id="PS00222">
    <property type="entry name" value="IGFBP_N_1"/>
    <property type="match status" value="1"/>
</dbReference>
<dbReference type="PROSITE" id="PS51323">
    <property type="entry name" value="IGFBP_N_2"/>
    <property type="match status" value="1"/>
</dbReference>
<dbReference type="PROSITE" id="PS00484">
    <property type="entry name" value="THYROGLOBULIN_1_1"/>
    <property type="match status" value="1"/>
</dbReference>
<dbReference type="PROSITE" id="PS51162">
    <property type="entry name" value="THYROGLOBULIN_1_2"/>
    <property type="match status" value="1"/>
</dbReference>
<organism>
    <name type="scientific">Ovis aries</name>
    <name type="common">Sheep</name>
    <dbReference type="NCBI Taxonomy" id="9940"/>
    <lineage>
        <taxon>Eukaryota</taxon>
        <taxon>Metazoa</taxon>
        <taxon>Chordata</taxon>
        <taxon>Craniata</taxon>
        <taxon>Vertebrata</taxon>
        <taxon>Euteleostomi</taxon>
        <taxon>Mammalia</taxon>
        <taxon>Eutheria</taxon>
        <taxon>Laurasiatheria</taxon>
        <taxon>Artiodactyla</taxon>
        <taxon>Ruminantia</taxon>
        <taxon>Pecora</taxon>
        <taxon>Bovidae</taxon>
        <taxon>Caprinae</taxon>
        <taxon>Ovis</taxon>
    </lineage>
</organism>
<protein>
    <recommendedName>
        <fullName>Insulin-like growth factor-binding protein 4</fullName>
        <shortName>IBP-4</shortName>
        <shortName>IGF-binding protein 4</shortName>
        <shortName>IGFBP-4</shortName>
    </recommendedName>
</protein>
<accession>Q28893</accession>
<feature type="chain" id="PRO_0000152774" description="Insulin-like growth factor-binding protein 4">
    <location>
        <begin position="1"/>
        <end position="237"/>
    </location>
</feature>
<feature type="domain" description="IGFBP N-terminal" evidence="4">
    <location>
        <begin position="2"/>
        <end position="82"/>
    </location>
</feature>
<feature type="domain" description="Thyroglobulin type-1" evidence="3">
    <location>
        <begin position="150"/>
        <end position="228"/>
    </location>
</feature>
<feature type="modified residue" description="Phosphoserine" evidence="2">
    <location>
        <position position="234"/>
    </location>
</feature>
<feature type="glycosylation site" description="N-linked (GlcNAc...) asparagine" evidence="5">
    <location>
        <position position="104"/>
    </location>
</feature>
<feature type="disulfide bond" evidence="4">
    <location>
        <begin position="6"/>
        <end position="32"/>
    </location>
</feature>
<feature type="disulfide bond" evidence="4">
    <location>
        <begin position="9"/>
        <end position="34"/>
    </location>
</feature>
<feature type="disulfide bond" evidence="4">
    <location>
        <begin position="17"/>
        <end position="35"/>
    </location>
</feature>
<feature type="disulfide bond" evidence="4">
    <location>
        <begin position="23"/>
        <end position="38"/>
    </location>
</feature>
<feature type="disulfide bond" evidence="4">
    <location>
        <begin position="46"/>
        <end position="59"/>
    </location>
</feature>
<feature type="disulfide bond" evidence="4">
    <location>
        <begin position="53"/>
        <end position="79"/>
    </location>
</feature>
<feature type="disulfide bond" evidence="3">
    <location>
        <begin position="110"/>
        <end position="117"/>
    </location>
</feature>
<feature type="disulfide bond" evidence="3">
    <location>
        <begin position="153"/>
        <end position="183"/>
    </location>
</feature>
<feature type="disulfide bond" evidence="3">
    <location>
        <begin position="194"/>
        <end position="205"/>
    </location>
</feature>
<feature type="disulfide bond" evidence="3">
    <location>
        <begin position="207"/>
        <end position="228"/>
    </location>
</feature>
<proteinExistence type="evidence at protein level"/>